<evidence type="ECO:0000255" key="1">
    <source>
        <dbReference type="HAMAP-Rule" id="MF_00222"/>
    </source>
</evidence>
<reference key="1">
    <citation type="journal article" date="2006" name="BMC Genomics">
        <title>Complete genome sequence of Shigella flexneri 5b and comparison with Shigella flexneri 2a.</title>
        <authorList>
            <person name="Nie H."/>
            <person name="Yang F."/>
            <person name="Zhang X."/>
            <person name="Yang J."/>
            <person name="Chen L."/>
            <person name="Wang J."/>
            <person name="Xiong Z."/>
            <person name="Peng J."/>
            <person name="Sun L."/>
            <person name="Dong J."/>
            <person name="Xue Y."/>
            <person name="Xu X."/>
            <person name="Chen S."/>
            <person name="Yao Z."/>
            <person name="Shen Y."/>
            <person name="Jin Q."/>
        </authorList>
    </citation>
    <scope>NUCLEOTIDE SEQUENCE [LARGE SCALE GENOMIC DNA]</scope>
    <source>
        <strain>8401</strain>
    </source>
</reference>
<keyword id="KW-0028">Amino-acid biosynthesis</keyword>
<keyword id="KW-0057">Aromatic amino acid biosynthesis</keyword>
<keyword id="KW-0521">NADP</keyword>
<keyword id="KW-0560">Oxidoreductase</keyword>
<feature type="chain" id="PRO_1000021333" description="Shikimate dehydrogenase (NADP(+))">
    <location>
        <begin position="1"/>
        <end position="272"/>
    </location>
</feature>
<feature type="active site" description="Proton acceptor" evidence="1">
    <location>
        <position position="65"/>
    </location>
</feature>
<feature type="binding site" evidence="1">
    <location>
        <begin position="14"/>
        <end position="16"/>
    </location>
    <ligand>
        <name>shikimate</name>
        <dbReference type="ChEBI" id="CHEBI:36208"/>
    </ligand>
</feature>
<feature type="binding site" evidence="1">
    <location>
        <position position="61"/>
    </location>
    <ligand>
        <name>shikimate</name>
        <dbReference type="ChEBI" id="CHEBI:36208"/>
    </ligand>
</feature>
<feature type="binding site" evidence="1">
    <location>
        <position position="77"/>
    </location>
    <ligand>
        <name>NADP(+)</name>
        <dbReference type="ChEBI" id="CHEBI:58349"/>
    </ligand>
</feature>
<feature type="binding site" evidence="1">
    <location>
        <position position="86"/>
    </location>
    <ligand>
        <name>shikimate</name>
        <dbReference type="ChEBI" id="CHEBI:36208"/>
    </ligand>
</feature>
<feature type="binding site" evidence="1">
    <location>
        <position position="102"/>
    </location>
    <ligand>
        <name>shikimate</name>
        <dbReference type="ChEBI" id="CHEBI:36208"/>
    </ligand>
</feature>
<feature type="binding site" evidence="1">
    <location>
        <begin position="126"/>
        <end position="130"/>
    </location>
    <ligand>
        <name>NADP(+)</name>
        <dbReference type="ChEBI" id="CHEBI:58349"/>
    </ligand>
</feature>
<feature type="binding site" evidence="1">
    <location>
        <begin position="149"/>
        <end position="154"/>
    </location>
    <ligand>
        <name>NADP(+)</name>
        <dbReference type="ChEBI" id="CHEBI:58349"/>
    </ligand>
</feature>
<feature type="binding site" evidence="1">
    <location>
        <position position="213"/>
    </location>
    <ligand>
        <name>NADP(+)</name>
        <dbReference type="ChEBI" id="CHEBI:58349"/>
    </ligand>
</feature>
<feature type="binding site" evidence="1">
    <location>
        <position position="215"/>
    </location>
    <ligand>
        <name>shikimate</name>
        <dbReference type="ChEBI" id="CHEBI:36208"/>
    </ligand>
</feature>
<feature type="binding site" evidence="1">
    <location>
        <position position="237"/>
    </location>
    <ligand>
        <name>NADP(+)</name>
        <dbReference type="ChEBI" id="CHEBI:58349"/>
    </ligand>
</feature>
<sequence length="272" mass="29466">METYAVFGNPIAHSKSPFIHQQFAQQLNIEHPYGRVLAPINDFINTLNAFFRAGGKGANVTVPFKEEAFARADELTERAALSGAVNTLKRLEDGRLLGDNTDGVGLLSDLERLSFIRPGLRILLIGAGGASRGVLLPLLSLDCAVTITNRTVSRAEELAKLFAHTGSIQALGMDELEGHEFDLIINATSSGISGDIPAIPSSLIHPGIYCYDMFYQKGKTPFLAWCEQRGSKRNADGLGMLVAQAAHAFLLWHGVLPDVEPVIKQLQEELSA</sequence>
<proteinExistence type="inferred from homology"/>
<gene>
    <name evidence="1" type="primary">aroE</name>
    <name type="ordered locus">SFV_3302</name>
</gene>
<dbReference type="EC" id="1.1.1.25" evidence="1"/>
<dbReference type="EMBL" id="CP000266">
    <property type="protein sequence ID" value="ABF05345.1"/>
    <property type="molecule type" value="Genomic_DNA"/>
</dbReference>
<dbReference type="RefSeq" id="WP_000451223.1">
    <property type="nucleotide sequence ID" value="NC_008258.1"/>
</dbReference>
<dbReference type="SMR" id="Q0T020"/>
<dbReference type="KEGG" id="sfv:SFV_3302"/>
<dbReference type="HOGENOM" id="CLU_044063_2_1_6"/>
<dbReference type="UniPathway" id="UPA00053">
    <property type="reaction ID" value="UER00087"/>
</dbReference>
<dbReference type="Proteomes" id="UP000000659">
    <property type="component" value="Chromosome"/>
</dbReference>
<dbReference type="GO" id="GO:0005829">
    <property type="term" value="C:cytosol"/>
    <property type="evidence" value="ECO:0007669"/>
    <property type="project" value="TreeGrafter"/>
</dbReference>
<dbReference type="GO" id="GO:0050661">
    <property type="term" value="F:NADP binding"/>
    <property type="evidence" value="ECO:0007669"/>
    <property type="project" value="InterPro"/>
</dbReference>
<dbReference type="GO" id="GO:0004764">
    <property type="term" value="F:shikimate 3-dehydrogenase (NADP+) activity"/>
    <property type="evidence" value="ECO:0007669"/>
    <property type="project" value="UniProtKB-UniRule"/>
</dbReference>
<dbReference type="GO" id="GO:0008652">
    <property type="term" value="P:amino acid biosynthetic process"/>
    <property type="evidence" value="ECO:0007669"/>
    <property type="project" value="UniProtKB-KW"/>
</dbReference>
<dbReference type="GO" id="GO:0009073">
    <property type="term" value="P:aromatic amino acid family biosynthetic process"/>
    <property type="evidence" value="ECO:0007669"/>
    <property type="project" value="UniProtKB-KW"/>
</dbReference>
<dbReference type="GO" id="GO:0009423">
    <property type="term" value="P:chorismate biosynthetic process"/>
    <property type="evidence" value="ECO:0007669"/>
    <property type="project" value="UniProtKB-UniRule"/>
</dbReference>
<dbReference type="GO" id="GO:0019632">
    <property type="term" value="P:shikimate metabolic process"/>
    <property type="evidence" value="ECO:0007669"/>
    <property type="project" value="InterPro"/>
</dbReference>
<dbReference type="CDD" id="cd01065">
    <property type="entry name" value="NAD_bind_Shikimate_DH"/>
    <property type="match status" value="1"/>
</dbReference>
<dbReference type="FunFam" id="3.40.50.10860:FF:000006">
    <property type="entry name" value="Shikimate dehydrogenase (NADP(+))"/>
    <property type="match status" value="1"/>
</dbReference>
<dbReference type="FunFam" id="3.40.50.720:FF:000104">
    <property type="entry name" value="Shikimate dehydrogenase (NADP(+))"/>
    <property type="match status" value="1"/>
</dbReference>
<dbReference type="Gene3D" id="3.40.50.10860">
    <property type="entry name" value="Leucine Dehydrogenase, chain A, domain 1"/>
    <property type="match status" value="1"/>
</dbReference>
<dbReference type="Gene3D" id="3.40.50.720">
    <property type="entry name" value="NAD(P)-binding Rossmann-like Domain"/>
    <property type="match status" value="1"/>
</dbReference>
<dbReference type="HAMAP" id="MF_00222">
    <property type="entry name" value="Shikimate_DH_AroE"/>
    <property type="match status" value="1"/>
</dbReference>
<dbReference type="InterPro" id="IPR046346">
    <property type="entry name" value="Aminoacid_DH-like_N_sf"/>
</dbReference>
<dbReference type="InterPro" id="IPR036291">
    <property type="entry name" value="NAD(P)-bd_dom_sf"/>
</dbReference>
<dbReference type="InterPro" id="IPR041121">
    <property type="entry name" value="SDH_C"/>
</dbReference>
<dbReference type="InterPro" id="IPR011342">
    <property type="entry name" value="Shikimate_DH"/>
</dbReference>
<dbReference type="InterPro" id="IPR013708">
    <property type="entry name" value="Shikimate_DH-bd_N"/>
</dbReference>
<dbReference type="InterPro" id="IPR022893">
    <property type="entry name" value="Shikimate_DH_fam"/>
</dbReference>
<dbReference type="InterPro" id="IPR006151">
    <property type="entry name" value="Shikm_DH/Glu-tRNA_Rdtase"/>
</dbReference>
<dbReference type="NCBIfam" id="TIGR00507">
    <property type="entry name" value="aroE"/>
    <property type="match status" value="1"/>
</dbReference>
<dbReference type="NCBIfam" id="NF001310">
    <property type="entry name" value="PRK00258.1-2"/>
    <property type="match status" value="1"/>
</dbReference>
<dbReference type="PANTHER" id="PTHR21089:SF1">
    <property type="entry name" value="BIFUNCTIONAL 3-DEHYDROQUINATE DEHYDRATASE_SHIKIMATE DEHYDROGENASE, CHLOROPLASTIC"/>
    <property type="match status" value="1"/>
</dbReference>
<dbReference type="PANTHER" id="PTHR21089">
    <property type="entry name" value="SHIKIMATE DEHYDROGENASE"/>
    <property type="match status" value="1"/>
</dbReference>
<dbReference type="Pfam" id="PF18317">
    <property type="entry name" value="SDH_C"/>
    <property type="match status" value="1"/>
</dbReference>
<dbReference type="Pfam" id="PF01488">
    <property type="entry name" value="Shikimate_DH"/>
    <property type="match status" value="1"/>
</dbReference>
<dbReference type="Pfam" id="PF08501">
    <property type="entry name" value="Shikimate_dh_N"/>
    <property type="match status" value="1"/>
</dbReference>
<dbReference type="SUPFAM" id="SSF53223">
    <property type="entry name" value="Aminoacid dehydrogenase-like, N-terminal domain"/>
    <property type="match status" value="1"/>
</dbReference>
<dbReference type="SUPFAM" id="SSF51735">
    <property type="entry name" value="NAD(P)-binding Rossmann-fold domains"/>
    <property type="match status" value="1"/>
</dbReference>
<protein>
    <recommendedName>
        <fullName evidence="1">Shikimate dehydrogenase (NADP(+))</fullName>
        <shortName evidence="1">SDH</shortName>
        <ecNumber evidence="1">1.1.1.25</ecNumber>
    </recommendedName>
</protein>
<accession>Q0T020</accession>
<name>AROE_SHIF8</name>
<organism>
    <name type="scientific">Shigella flexneri serotype 5b (strain 8401)</name>
    <dbReference type="NCBI Taxonomy" id="373384"/>
    <lineage>
        <taxon>Bacteria</taxon>
        <taxon>Pseudomonadati</taxon>
        <taxon>Pseudomonadota</taxon>
        <taxon>Gammaproteobacteria</taxon>
        <taxon>Enterobacterales</taxon>
        <taxon>Enterobacteriaceae</taxon>
        <taxon>Shigella</taxon>
    </lineage>
</organism>
<comment type="function">
    <text evidence="1">Involved in the biosynthesis of the chorismate, which leads to the biosynthesis of aromatic amino acids. Catalyzes the reversible NADPH linked reduction of 3-dehydroshikimate (DHSA) to yield shikimate (SA).</text>
</comment>
<comment type="catalytic activity">
    <reaction evidence="1">
        <text>shikimate + NADP(+) = 3-dehydroshikimate + NADPH + H(+)</text>
        <dbReference type="Rhea" id="RHEA:17737"/>
        <dbReference type="ChEBI" id="CHEBI:15378"/>
        <dbReference type="ChEBI" id="CHEBI:16630"/>
        <dbReference type="ChEBI" id="CHEBI:36208"/>
        <dbReference type="ChEBI" id="CHEBI:57783"/>
        <dbReference type="ChEBI" id="CHEBI:58349"/>
        <dbReference type="EC" id="1.1.1.25"/>
    </reaction>
</comment>
<comment type="pathway">
    <text evidence="1">Metabolic intermediate biosynthesis; chorismate biosynthesis; chorismate from D-erythrose 4-phosphate and phosphoenolpyruvate: step 4/7.</text>
</comment>
<comment type="subunit">
    <text evidence="1">Homodimer.</text>
</comment>
<comment type="similarity">
    <text evidence="1">Belongs to the shikimate dehydrogenase family.</text>
</comment>